<gene>
    <name evidence="2" type="primary">SNRPC</name>
</gene>
<feature type="chain" id="PRO_0000414250" description="U1 small nuclear ribonucleoprotein C">
    <location>
        <begin position="1"/>
        <end position="159"/>
    </location>
</feature>
<feature type="zinc finger region" description="Matrin-type" evidence="2">
    <location>
        <begin position="4"/>
        <end position="36"/>
    </location>
</feature>
<feature type="region of interest" description="Disordered" evidence="3">
    <location>
        <begin position="62"/>
        <end position="96"/>
    </location>
</feature>
<feature type="region of interest" description="Disordered" evidence="3">
    <location>
        <begin position="140"/>
        <end position="159"/>
    </location>
</feature>
<feature type="compositionally biased region" description="Pro residues" evidence="3">
    <location>
        <begin position="63"/>
        <end position="92"/>
    </location>
</feature>
<feature type="modified residue" description="Phosphotyrosine" evidence="1">
    <location>
        <position position="8"/>
    </location>
</feature>
<feature type="modified residue" description="Phosphoserine" evidence="1">
    <location>
        <position position="17"/>
    </location>
</feature>
<feature type="modified residue" description="N6-acetyllysine" evidence="1">
    <location>
        <position position="52"/>
    </location>
</feature>
<evidence type="ECO:0000250" key="1">
    <source>
        <dbReference type="UniProtKB" id="P09234"/>
    </source>
</evidence>
<evidence type="ECO:0000255" key="2">
    <source>
        <dbReference type="HAMAP-Rule" id="MF_03153"/>
    </source>
</evidence>
<evidence type="ECO:0000256" key="3">
    <source>
        <dbReference type="SAM" id="MobiDB-lite"/>
    </source>
</evidence>
<proteinExistence type="inferred from homology"/>
<accession>F6TFD9</accession>
<keyword id="KW-0007">Acetylation</keyword>
<keyword id="KW-0479">Metal-binding</keyword>
<keyword id="KW-0539">Nucleus</keyword>
<keyword id="KW-0597">Phosphoprotein</keyword>
<keyword id="KW-1185">Reference proteome</keyword>
<keyword id="KW-0687">Ribonucleoprotein</keyword>
<keyword id="KW-0694">RNA-binding</keyword>
<keyword id="KW-0862">Zinc</keyword>
<keyword id="KW-0863">Zinc-finger</keyword>
<dbReference type="BMRB" id="F6TFD9"/>
<dbReference type="SMR" id="F6TFD9"/>
<dbReference type="FunCoup" id="F6TFD9">
    <property type="interactions" value="2148"/>
</dbReference>
<dbReference type="STRING" id="9544.ENSMMUP00000033820"/>
<dbReference type="PaxDb" id="9544-ENSMMUP00000033820"/>
<dbReference type="Ensembl" id="ENSMMUT00000040794.3">
    <property type="protein sequence ID" value="ENSMMUP00000033820.3"/>
    <property type="gene ID" value="ENSMMUG00000000869.4"/>
</dbReference>
<dbReference type="VEuPathDB" id="HostDB:ENSMMUG00000000869"/>
<dbReference type="eggNOG" id="KOG3454">
    <property type="taxonomic scope" value="Eukaryota"/>
</dbReference>
<dbReference type="GeneTree" id="ENSGT00730000110997"/>
<dbReference type="HOGENOM" id="CLU_079697_3_0_1"/>
<dbReference type="InParanoid" id="F6TFD9"/>
<dbReference type="OMA" id="QMRPPLM"/>
<dbReference type="Proteomes" id="UP000006718">
    <property type="component" value="Chromosome 4"/>
</dbReference>
<dbReference type="Bgee" id="ENSMMUG00000000869">
    <property type="expression patterns" value="Expressed in fibroblast and 20 other cell types or tissues"/>
</dbReference>
<dbReference type="ExpressionAtlas" id="F6TFD9">
    <property type="expression patterns" value="baseline"/>
</dbReference>
<dbReference type="GO" id="GO:0015030">
    <property type="term" value="C:Cajal body"/>
    <property type="evidence" value="ECO:0007669"/>
    <property type="project" value="Ensembl"/>
</dbReference>
<dbReference type="GO" id="GO:0000243">
    <property type="term" value="C:commitment complex"/>
    <property type="evidence" value="ECO:0007669"/>
    <property type="project" value="UniProtKB-UniRule"/>
</dbReference>
<dbReference type="GO" id="GO:0005685">
    <property type="term" value="C:U1 snRNP"/>
    <property type="evidence" value="ECO:0000250"/>
    <property type="project" value="UniProtKB"/>
</dbReference>
<dbReference type="GO" id="GO:0071004">
    <property type="term" value="C:U2-type prespliceosome"/>
    <property type="evidence" value="ECO:0007669"/>
    <property type="project" value="UniProtKB-UniRule"/>
</dbReference>
<dbReference type="GO" id="GO:0003729">
    <property type="term" value="F:mRNA binding"/>
    <property type="evidence" value="ECO:0007669"/>
    <property type="project" value="UniProtKB-UniRule"/>
</dbReference>
<dbReference type="GO" id="GO:0030627">
    <property type="term" value="F:pre-mRNA 5'-splice site binding"/>
    <property type="evidence" value="ECO:0000318"/>
    <property type="project" value="GO_Central"/>
</dbReference>
<dbReference type="GO" id="GO:0042803">
    <property type="term" value="F:protein homodimerization activity"/>
    <property type="evidence" value="ECO:0007669"/>
    <property type="project" value="Ensembl"/>
</dbReference>
<dbReference type="GO" id="GO:0003727">
    <property type="term" value="F:single-stranded RNA binding"/>
    <property type="evidence" value="ECO:0007669"/>
    <property type="project" value="Ensembl"/>
</dbReference>
<dbReference type="GO" id="GO:0030619">
    <property type="term" value="F:U1 snRNA binding"/>
    <property type="evidence" value="ECO:0007669"/>
    <property type="project" value="UniProtKB-UniRule"/>
</dbReference>
<dbReference type="GO" id="GO:0008270">
    <property type="term" value="F:zinc ion binding"/>
    <property type="evidence" value="ECO:0007669"/>
    <property type="project" value="UniProtKB-UniRule"/>
</dbReference>
<dbReference type="GO" id="GO:0000395">
    <property type="term" value="P:mRNA 5'-splice site recognition"/>
    <property type="evidence" value="ECO:0000318"/>
    <property type="project" value="GO_Central"/>
</dbReference>
<dbReference type="GO" id="GO:0000387">
    <property type="term" value="P:spliceosomal snRNP assembly"/>
    <property type="evidence" value="ECO:0007669"/>
    <property type="project" value="UniProtKB-UniRule"/>
</dbReference>
<dbReference type="FunFam" id="3.30.160.60:FF:000059">
    <property type="entry name" value="U1 small nuclear ribonucleoprotein C"/>
    <property type="match status" value="1"/>
</dbReference>
<dbReference type="Gene3D" id="3.30.160.60">
    <property type="entry name" value="Classic Zinc Finger"/>
    <property type="match status" value="1"/>
</dbReference>
<dbReference type="HAMAP" id="MF_03153">
    <property type="entry name" value="U1_C"/>
    <property type="match status" value="1"/>
</dbReference>
<dbReference type="InterPro" id="IPR000690">
    <property type="entry name" value="Matrin/U1-C_Znf_C2H2"/>
</dbReference>
<dbReference type="InterPro" id="IPR003604">
    <property type="entry name" value="Matrin/U1-like-C_Znf_C2H2"/>
</dbReference>
<dbReference type="InterPro" id="IPR013085">
    <property type="entry name" value="U1-CZ_Znf_C2H2"/>
</dbReference>
<dbReference type="InterPro" id="IPR017340">
    <property type="entry name" value="U1_snRNP-C"/>
</dbReference>
<dbReference type="InterPro" id="IPR036236">
    <property type="entry name" value="Znf_C2H2_sf"/>
</dbReference>
<dbReference type="PANTHER" id="PTHR31148">
    <property type="entry name" value="U1 SMALL NUCLEAR RIBONUCLEOPROTEIN C"/>
    <property type="match status" value="1"/>
</dbReference>
<dbReference type="PANTHER" id="PTHR31148:SF1">
    <property type="entry name" value="U1 SMALL NUCLEAR RIBONUCLEOPROTEIN C"/>
    <property type="match status" value="1"/>
</dbReference>
<dbReference type="Pfam" id="PF06220">
    <property type="entry name" value="zf-U1"/>
    <property type="match status" value="1"/>
</dbReference>
<dbReference type="PIRSF" id="PIRSF037969">
    <property type="entry name" value="U1_snRNP-C"/>
    <property type="match status" value="1"/>
</dbReference>
<dbReference type="SMART" id="SM00451">
    <property type="entry name" value="ZnF_U1"/>
    <property type="match status" value="1"/>
</dbReference>
<dbReference type="SUPFAM" id="SSF57667">
    <property type="entry name" value="beta-beta-alpha zinc fingers"/>
    <property type="match status" value="1"/>
</dbReference>
<dbReference type="PROSITE" id="PS50171">
    <property type="entry name" value="ZF_MATRIN"/>
    <property type="match status" value="1"/>
</dbReference>
<protein>
    <recommendedName>
        <fullName evidence="2">U1 small nuclear ribonucleoprotein C</fullName>
        <shortName evidence="2">U1 snRNP C</shortName>
        <shortName evidence="2">U1-C</shortName>
        <shortName evidence="2">U1C</shortName>
    </recommendedName>
</protein>
<sequence>MPKFYCDYCDTYLTHDSPSVRKTHCSGRKHKENVKDYYQKWMEEQAQSLIDKTTAAFQQGKIPPTPFSAPPPAGAMIPPPPSLPGPPRPGMMPAPHMGGPPMMPMMGPPPPGMMPVGPAPGMRPPMGGHMPMMPGPPMMRPPARPMMVPTRPGMTRPDR</sequence>
<name>RU1C_MACMU</name>
<comment type="function">
    <text evidence="2">Component of the spliceosomal U1 snRNP, which is essential for recognition of the pre-mRNA 5' splice-site and the subsequent assembly of the spliceosome. SNRPC/U1-C is directly involved in initial 5' splice-site recognition for both constitutive and regulated alternative splicing. The interaction with the 5' splice-site seems to precede base-pairing between the pre-mRNA and the U1 snRNA. Stimulates commitment or early (E) complex formation by stabilizing the base pairing of the 5' end of the U1 snRNA and the 5' splice-site region.</text>
</comment>
<comment type="subunit">
    <text evidence="1 2">Component of the U1 snRNP. The U1 snRNP is composed of the U1 snRNA and the 7 core Sm proteins SNRPB, SNRPD1, SNRPD2, SNRPD3, SNRPE, SNRPF and SNRPG that assemble in a heptameric protein ring on the Sm site of the small nuclear RNA to form the core snRNP, and at least 3 U1 snRNP-specific proteins SNRNP70/U1-70K, SNRPA/U1-A and SNRPC/U1-C. SNRPC/U1-C interacts with U1 snRNA and the 5' splice-site region of the pre-mRNA (By similarity). Interacts (via N-terminus) with TIA1 (via C-terminus); thereby promoting spliceosomal U1 snRNP recruitment to 5' splice sites (By similarity).</text>
</comment>
<comment type="subcellular location">
    <subcellularLocation>
        <location evidence="2">Nucleus</location>
    </subcellularLocation>
</comment>
<comment type="similarity">
    <text evidence="2">Belongs to the U1 small nuclear ribonucleoprotein C family.</text>
</comment>
<organism>
    <name type="scientific">Macaca mulatta</name>
    <name type="common">Rhesus macaque</name>
    <dbReference type="NCBI Taxonomy" id="9544"/>
    <lineage>
        <taxon>Eukaryota</taxon>
        <taxon>Metazoa</taxon>
        <taxon>Chordata</taxon>
        <taxon>Craniata</taxon>
        <taxon>Vertebrata</taxon>
        <taxon>Euteleostomi</taxon>
        <taxon>Mammalia</taxon>
        <taxon>Eutheria</taxon>
        <taxon>Euarchontoglires</taxon>
        <taxon>Primates</taxon>
        <taxon>Haplorrhini</taxon>
        <taxon>Catarrhini</taxon>
        <taxon>Cercopithecidae</taxon>
        <taxon>Cercopithecinae</taxon>
        <taxon>Macaca</taxon>
    </lineage>
</organism>
<reference key="1">
    <citation type="journal article" date="2007" name="Science">
        <title>Evolutionary and biomedical insights from the rhesus macaque genome.</title>
        <authorList>
            <person name="Gibbs R.A."/>
            <person name="Rogers J."/>
            <person name="Katze M.G."/>
            <person name="Bumgarner R."/>
            <person name="Weinstock G.M."/>
            <person name="Mardis E.R."/>
            <person name="Remington K.A."/>
            <person name="Strausberg R.L."/>
            <person name="Venter J.C."/>
            <person name="Wilson R.K."/>
            <person name="Batzer M.A."/>
            <person name="Bustamante C.D."/>
            <person name="Eichler E.E."/>
            <person name="Hahn M.W."/>
            <person name="Hardison R.C."/>
            <person name="Makova K.D."/>
            <person name="Miller W."/>
            <person name="Milosavljevic A."/>
            <person name="Palermo R.E."/>
            <person name="Siepel A."/>
            <person name="Sikela J.M."/>
            <person name="Attaway T."/>
            <person name="Bell S."/>
            <person name="Bernard K.E."/>
            <person name="Buhay C.J."/>
            <person name="Chandrabose M.N."/>
            <person name="Dao M."/>
            <person name="Davis C."/>
            <person name="Delehaunty K.D."/>
            <person name="Ding Y."/>
            <person name="Dinh H.H."/>
            <person name="Dugan-Rocha S."/>
            <person name="Fulton L.A."/>
            <person name="Gabisi R.A."/>
            <person name="Garner T.T."/>
            <person name="Godfrey J."/>
            <person name="Hawes A.C."/>
            <person name="Hernandez J."/>
            <person name="Hines S."/>
            <person name="Holder M."/>
            <person name="Hume J."/>
            <person name="Jhangiani S.N."/>
            <person name="Joshi V."/>
            <person name="Khan Z.M."/>
            <person name="Kirkness E.F."/>
            <person name="Cree A."/>
            <person name="Fowler R.G."/>
            <person name="Lee S."/>
            <person name="Lewis L.R."/>
            <person name="Li Z."/>
            <person name="Liu Y.-S."/>
            <person name="Moore S.M."/>
            <person name="Muzny D."/>
            <person name="Nazareth L.V."/>
            <person name="Ngo D.N."/>
            <person name="Okwuonu G.O."/>
            <person name="Pai G."/>
            <person name="Parker D."/>
            <person name="Paul H.A."/>
            <person name="Pfannkoch C."/>
            <person name="Pohl C.S."/>
            <person name="Rogers Y.-H.C."/>
            <person name="Ruiz S.J."/>
            <person name="Sabo A."/>
            <person name="Santibanez J."/>
            <person name="Schneider B.W."/>
            <person name="Smith S.M."/>
            <person name="Sodergren E."/>
            <person name="Svatek A.F."/>
            <person name="Utterback T.R."/>
            <person name="Vattathil S."/>
            <person name="Warren W."/>
            <person name="White C.S."/>
            <person name="Chinwalla A.T."/>
            <person name="Feng Y."/>
            <person name="Halpern A.L."/>
            <person name="Hillier L.W."/>
            <person name="Huang X."/>
            <person name="Minx P."/>
            <person name="Nelson J.O."/>
            <person name="Pepin K.H."/>
            <person name="Qin X."/>
            <person name="Sutton G.G."/>
            <person name="Venter E."/>
            <person name="Walenz B.P."/>
            <person name="Wallis J.W."/>
            <person name="Worley K.C."/>
            <person name="Yang S.-P."/>
            <person name="Jones S.M."/>
            <person name="Marra M.A."/>
            <person name="Rocchi M."/>
            <person name="Schein J.E."/>
            <person name="Baertsch R."/>
            <person name="Clarke L."/>
            <person name="Csuros M."/>
            <person name="Glasscock J."/>
            <person name="Harris R.A."/>
            <person name="Havlak P."/>
            <person name="Jackson A.R."/>
            <person name="Jiang H."/>
            <person name="Liu Y."/>
            <person name="Messina D.N."/>
            <person name="Shen Y."/>
            <person name="Song H.X.-Z."/>
            <person name="Wylie T."/>
            <person name="Zhang L."/>
            <person name="Birney E."/>
            <person name="Han K."/>
            <person name="Konkel M.K."/>
            <person name="Lee J."/>
            <person name="Smit A.F.A."/>
            <person name="Ullmer B."/>
            <person name="Wang H."/>
            <person name="Xing J."/>
            <person name="Burhans R."/>
            <person name="Cheng Z."/>
            <person name="Karro J.E."/>
            <person name="Ma J."/>
            <person name="Raney B."/>
            <person name="She X."/>
            <person name="Cox M.J."/>
            <person name="Demuth J.P."/>
            <person name="Dumas L.J."/>
            <person name="Han S.-G."/>
            <person name="Hopkins J."/>
            <person name="Karimpour-Fard A."/>
            <person name="Kim Y.H."/>
            <person name="Pollack J.R."/>
            <person name="Vinar T."/>
            <person name="Addo-Quaye C."/>
            <person name="Degenhardt J."/>
            <person name="Denby A."/>
            <person name="Hubisz M.J."/>
            <person name="Indap A."/>
            <person name="Kosiol C."/>
            <person name="Lahn B.T."/>
            <person name="Lawson H.A."/>
            <person name="Marklein A."/>
            <person name="Nielsen R."/>
            <person name="Vallender E.J."/>
            <person name="Clark A.G."/>
            <person name="Ferguson B."/>
            <person name="Hernandez R.D."/>
            <person name="Hirani K."/>
            <person name="Kehrer-Sawatzki H."/>
            <person name="Kolb J."/>
            <person name="Patil S."/>
            <person name="Pu L.-L."/>
            <person name="Ren Y."/>
            <person name="Smith D.G."/>
            <person name="Wheeler D.A."/>
            <person name="Schenck I."/>
            <person name="Ball E.V."/>
            <person name="Chen R."/>
            <person name="Cooper D.N."/>
            <person name="Giardine B."/>
            <person name="Hsu F."/>
            <person name="Kent W.J."/>
            <person name="Lesk A."/>
            <person name="Nelson D.L."/>
            <person name="O'brien W.E."/>
            <person name="Pruefer K."/>
            <person name="Stenson P.D."/>
            <person name="Wallace J.C."/>
            <person name="Ke H."/>
            <person name="Liu X.-M."/>
            <person name="Wang P."/>
            <person name="Xiang A.P."/>
            <person name="Yang F."/>
            <person name="Barber G.P."/>
            <person name="Haussler D."/>
            <person name="Karolchik D."/>
            <person name="Kern A.D."/>
            <person name="Kuhn R.M."/>
            <person name="Smith K.E."/>
            <person name="Zwieg A.S."/>
        </authorList>
    </citation>
    <scope>NUCLEOTIDE SEQUENCE [LARGE SCALE GENOMIC DNA]</scope>
    <source>
        <strain>17573</strain>
    </source>
</reference>